<organism>
    <name type="scientific">Lactiplantibacillus plantarum (strain ATCC BAA-793 / NCIMB 8826 / WCFS1)</name>
    <name type="common">Lactobacillus plantarum</name>
    <dbReference type="NCBI Taxonomy" id="220668"/>
    <lineage>
        <taxon>Bacteria</taxon>
        <taxon>Bacillati</taxon>
        <taxon>Bacillota</taxon>
        <taxon>Bacilli</taxon>
        <taxon>Lactobacillales</taxon>
        <taxon>Lactobacillaceae</taxon>
        <taxon>Lactiplantibacillus</taxon>
    </lineage>
</organism>
<sequence length="203" mass="21665">MYEYFLGQVTDVTPGYVVIEVSGIGYKVLTANPYRYQVGPTAVKMYIHQAVSENGMSLFGFFDADEKALFEKLLGVSGIGPKSALAILANNDHAGLIQAINQENATYLTSFPGVGKKTAQQIVLDLKGKLNDLNVDVTGQTALDVDAPAVDGALADALAALEALGYSKADVKKVTKKLETFSQTQGADTNTLLSEGLRLLMKK</sequence>
<keyword id="KW-0963">Cytoplasm</keyword>
<keyword id="KW-0227">DNA damage</keyword>
<keyword id="KW-0233">DNA recombination</keyword>
<keyword id="KW-0234">DNA repair</keyword>
<keyword id="KW-0238">DNA-binding</keyword>
<keyword id="KW-1185">Reference proteome</keyword>
<protein>
    <recommendedName>
        <fullName evidence="1">Holliday junction branch migration complex subunit RuvA</fullName>
    </recommendedName>
</protein>
<evidence type="ECO:0000255" key="1">
    <source>
        <dbReference type="HAMAP-Rule" id="MF_00031"/>
    </source>
</evidence>
<gene>
    <name evidence="1" type="primary">ruvA</name>
    <name type="ordered locus">lp_2287</name>
</gene>
<feature type="chain" id="PRO_0000094642" description="Holliday junction branch migration complex subunit RuvA">
    <location>
        <begin position="1"/>
        <end position="203"/>
    </location>
</feature>
<feature type="region of interest" description="Domain I" evidence="1">
    <location>
        <begin position="1"/>
        <end position="62"/>
    </location>
</feature>
<feature type="region of interest" description="Domain II" evidence="1">
    <location>
        <begin position="63"/>
        <end position="141"/>
    </location>
</feature>
<feature type="region of interest" description="Flexible linker" evidence="1">
    <location>
        <begin position="142"/>
        <end position="148"/>
    </location>
</feature>
<feature type="region of interest" description="Domain III" evidence="1">
    <location>
        <begin position="149"/>
        <end position="203"/>
    </location>
</feature>
<accession>Q88V02</accession>
<accession>F9UQK4</accession>
<proteinExistence type="inferred from homology"/>
<comment type="function">
    <text evidence="1">The RuvA-RuvB-RuvC complex processes Holliday junction (HJ) DNA during genetic recombination and DNA repair, while the RuvA-RuvB complex plays an important role in the rescue of blocked DNA replication forks via replication fork reversal (RFR). RuvA specifically binds to HJ cruciform DNA, conferring on it an open structure. The RuvB hexamer acts as an ATP-dependent pump, pulling dsDNA into and through the RuvAB complex. HJ branch migration allows RuvC to scan DNA until it finds its consensus sequence, where it cleaves and resolves the cruciform DNA.</text>
</comment>
<comment type="subunit">
    <text evidence="1">Homotetramer. Forms an RuvA(8)-RuvB(12)-Holliday junction (HJ) complex. HJ DNA is sandwiched between 2 RuvA tetramers; dsDNA enters through RuvA and exits via RuvB. An RuvB hexamer assembles on each DNA strand where it exits the tetramer. Each RuvB hexamer is contacted by two RuvA subunits (via domain III) on 2 adjacent RuvB subunits; this complex drives branch migration. In the full resolvosome a probable DNA-RuvA(4)-RuvB(12)-RuvC(2) complex forms which resolves the HJ.</text>
</comment>
<comment type="subcellular location">
    <subcellularLocation>
        <location evidence="1">Cytoplasm</location>
    </subcellularLocation>
</comment>
<comment type="domain">
    <text evidence="1">Has three domains with a flexible linker between the domains II and III and assumes an 'L' shape. Domain III is highly mobile and contacts RuvB.</text>
</comment>
<comment type="similarity">
    <text evidence="1">Belongs to the RuvA family.</text>
</comment>
<name>RUVA_LACPL</name>
<dbReference type="EMBL" id="AL935263">
    <property type="protein sequence ID" value="CCC79493.1"/>
    <property type="molecule type" value="Genomic_DNA"/>
</dbReference>
<dbReference type="RefSeq" id="WP_003644635.1">
    <property type="nucleotide sequence ID" value="NC_004567.2"/>
</dbReference>
<dbReference type="RefSeq" id="YP_004890007.1">
    <property type="nucleotide sequence ID" value="NC_004567.2"/>
</dbReference>
<dbReference type="SMR" id="Q88V02"/>
<dbReference type="STRING" id="220668.lp_2287"/>
<dbReference type="EnsemblBacteria" id="CCC79493">
    <property type="protein sequence ID" value="CCC79493"/>
    <property type="gene ID" value="lp_2287"/>
</dbReference>
<dbReference type="KEGG" id="lpl:lp_2287"/>
<dbReference type="PATRIC" id="fig|220668.9.peg.1935"/>
<dbReference type="eggNOG" id="COG0632">
    <property type="taxonomic scope" value="Bacteria"/>
</dbReference>
<dbReference type="HOGENOM" id="CLU_087936_1_0_9"/>
<dbReference type="OrthoDB" id="5293449at2"/>
<dbReference type="PhylomeDB" id="Q88V02"/>
<dbReference type="Proteomes" id="UP000000432">
    <property type="component" value="Chromosome"/>
</dbReference>
<dbReference type="GO" id="GO:0005737">
    <property type="term" value="C:cytoplasm"/>
    <property type="evidence" value="ECO:0007669"/>
    <property type="project" value="UniProtKB-SubCell"/>
</dbReference>
<dbReference type="GO" id="GO:0009379">
    <property type="term" value="C:Holliday junction helicase complex"/>
    <property type="evidence" value="ECO:0007669"/>
    <property type="project" value="InterPro"/>
</dbReference>
<dbReference type="GO" id="GO:0048476">
    <property type="term" value="C:Holliday junction resolvase complex"/>
    <property type="evidence" value="ECO:0007669"/>
    <property type="project" value="UniProtKB-UniRule"/>
</dbReference>
<dbReference type="GO" id="GO:0005524">
    <property type="term" value="F:ATP binding"/>
    <property type="evidence" value="ECO:0007669"/>
    <property type="project" value="InterPro"/>
</dbReference>
<dbReference type="GO" id="GO:0000400">
    <property type="term" value="F:four-way junction DNA binding"/>
    <property type="evidence" value="ECO:0007669"/>
    <property type="project" value="UniProtKB-UniRule"/>
</dbReference>
<dbReference type="GO" id="GO:0009378">
    <property type="term" value="F:four-way junction helicase activity"/>
    <property type="evidence" value="ECO:0007669"/>
    <property type="project" value="InterPro"/>
</dbReference>
<dbReference type="GO" id="GO:0006310">
    <property type="term" value="P:DNA recombination"/>
    <property type="evidence" value="ECO:0007669"/>
    <property type="project" value="UniProtKB-UniRule"/>
</dbReference>
<dbReference type="GO" id="GO:0006281">
    <property type="term" value="P:DNA repair"/>
    <property type="evidence" value="ECO:0007669"/>
    <property type="project" value="UniProtKB-UniRule"/>
</dbReference>
<dbReference type="Gene3D" id="1.10.150.20">
    <property type="entry name" value="5' to 3' exonuclease, C-terminal subdomain"/>
    <property type="match status" value="1"/>
</dbReference>
<dbReference type="Gene3D" id="1.10.8.10">
    <property type="entry name" value="DNA helicase RuvA subunit, C-terminal domain"/>
    <property type="match status" value="1"/>
</dbReference>
<dbReference type="Gene3D" id="2.40.50.140">
    <property type="entry name" value="Nucleic acid-binding proteins"/>
    <property type="match status" value="1"/>
</dbReference>
<dbReference type="HAMAP" id="MF_00031">
    <property type="entry name" value="DNA_HJ_migration_RuvA"/>
    <property type="match status" value="1"/>
</dbReference>
<dbReference type="InterPro" id="IPR013849">
    <property type="entry name" value="DNA_helicase_Holl-junc_RuvA_I"/>
</dbReference>
<dbReference type="InterPro" id="IPR003583">
    <property type="entry name" value="Hlx-hairpin-Hlx_DNA-bd_motif"/>
</dbReference>
<dbReference type="InterPro" id="IPR012340">
    <property type="entry name" value="NA-bd_OB-fold"/>
</dbReference>
<dbReference type="InterPro" id="IPR000085">
    <property type="entry name" value="RuvA"/>
</dbReference>
<dbReference type="InterPro" id="IPR010994">
    <property type="entry name" value="RuvA_2-like"/>
</dbReference>
<dbReference type="InterPro" id="IPR011114">
    <property type="entry name" value="RuvA_C"/>
</dbReference>
<dbReference type="InterPro" id="IPR036267">
    <property type="entry name" value="RuvA_C_sf"/>
</dbReference>
<dbReference type="NCBIfam" id="TIGR00084">
    <property type="entry name" value="ruvA"/>
    <property type="match status" value="1"/>
</dbReference>
<dbReference type="Pfam" id="PF14520">
    <property type="entry name" value="HHH_5"/>
    <property type="match status" value="1"/>
</dbReference>
<dbReference type="Pfam" id="PF07499">
    <property type="entry name" value="RuvA_C"/>
    <property type="match status" value="1"/>
</dbReference>
<dbReference type="Pfam" id="PF01330">
    <property type="entry name" value="RuvA_N"/>
    <property type="match status" value="1"/>
</dbReference>
<dbReference type="SMART" id="SM00278">
    <property type="entry name" value="HhH1"/>
    <property type="match status" value="2"/>
</dbReference>
<dbReference type="SUPFAM" id="SSF46929">
    <property type="entry name" value="DNA helicase RuvA subunit, C-terminal domain"/>
    <property type="match status" value="1"/>
</dbReference>
<dbReference type="SUPFAM" id="SSF50249">
    <property type="entry name" value="Nucleic acid-binding proteins"/>
    <property type="match status" value="1"/>
</dbReference>
<dbReference type="SUPFAM" id="SSF47781">
    <property type="entry name" value="RuvA domain 2-like"/>
    <property type="match status" value="1"/>
</dbReference>
<reference key="1">
    <citation type="journal article" date="2003" name="Proc. Natl. Acad. Sci. U.S.A.">
        <title>Complete genome sequence of Lactobacillus plantarum WCFS1.</title>
        <authorList>
            <person name="Kleerebezem M."/>
            <person name="Boekhorst J."/>
            <person name="van Kranenburg R."/>
            <person name="Molenaar D."/>
            <person name="Kuipers O.P."/>
            <person name="Leer R."/>
            <person name="Tarchini R."/>
            <person name="Peters S.A."/>
            <person name="Sandbrink H.M."/>
            <person name="Fiers M.W.E.J."/>
            <person name="Stiekema W."/>
            <person name="Klein Lankhorst R.M."/>
            <person name="Bron P.A."/>
            <person name="Hoffer S.M."/>
            <person name="Nierop Groot M.N."/>
            <person name="Kerkhoven R."/>
            <person name="De Vries M."/>
            <person name="Ursing B."/>
            <person name="De Vos W.M."/>
            <person name="Siezen R.J."/>
        </authorList>
    </citation>
    <scope>NUCLEOTIDE SEQUENCE [LARGE SCALE GENOMIC DNA]</scope>
    <source>
        <strain>ATCC BAA-793 / NCIMB 8826 / WCFS1</strain>
    </source>
</reference>
<reference key="2">
    <citation type="journal article" date="2012" name="J. Bacteriol.">
        <title>Complete resequencing and reannotation of the Lactobacillus plantarum WCFS1 genome.</title>
        <authorList>
            <person name="Siezen R.J."/>
            <person name="Francke C."/>
            <person name="Renckens B."/>
            <person name="Boekhorst J."/>
            <person name="Wels M."/>
            <person name="Kleerebezem M."/>
            <person name="van Hijum S.A."/>
        </authorList>
    </citation>
    <scope>NUCLEOTIDE SEQUENCE [LARGE SCALE GENOMIC DNA]</scope>
    <scope>GENOME REANNOTATION</scope>
    <source>
        <strain>ATCC BAA-793 / NCIMB 8826 / WCFS1</strain>
    </source>
</reference>